<reference key="1">
    <citation type="journal article" date="2006" name="Ann. N. Y. Acad. Sci.">
        <title>Identification of common antigens in Babesia bovis, B. bigemina, and B. divergens.</title>
        <authorList>
            <person name="Figueroa J.V."/>
            <person name="Precigout E."/>
            <person name="Carcy B."/>
            <person name="Gorenflot A."/>
        </authorList>
    </citation>
    <scope>NUCLEOTIDE SEQUENCE [MRNA]</scope>
    <source>
        <strain>Rouen 1987</strain>
    </source>
</reference>
<dbReference type="EMBL" id="DQ138321">
    <property type="protein sequence ID" value="AAZ66308.1"/>
    <property type="molecule type" value="mRNA"/>
</dbReference>
<dbReference type="SMR" id="Q45FF9"/>
<dbReference type="VEuPathDB" id="PiroplasmaDB:Bdiv_031930"/>
<dbReference type="GO" id="GO:0005854">
    <property type="term" value="C:nascent polypeptide-associated complex"/>
    <property type="evidence" value="ECO:0007669"/>
    <property type="project" value="InterPro"/>
</dbReference>
<dbReference type="GO" id="GO:0015031">
    <property type="term" value="P:protein transport"/>
    <property type="evidence" value="ECO:0007669"/>
    <property type="project" value="UniProtKB-KW"/>
</dbReference>
<dbReference type="CDD" id="cd22054">
    <property type="entry name" value="NAC_NACA"/>
    <property type="match status" value="1"/>
</dbReference>
<dbReference type="CDD" id="cd14278">
    <property type="entry name" value="UBA_NAC_like"/>
    <property type="match status" value="1"/>
</dbReference>
<dbReference type="FunFam" id="2.20.70.30:FF:000002">
    <property type="entry name" value="Nascent polypeptide-associated complex (NAC), alpha subunit"/>
    <property type="match status" value="1"/>
</dbReference>
<dbReference type="Gene3D" id="1.10.8.10">
    <property type="entry name" value="DNA helicase RuvA subunit, C-terminal domain"/>
    <property type="match status" value="1"/>
</dbReference>
<dbReference type="Gene3D" id="2.20.70.30">
    <property type="entry name" value="Nascent polypeptide-associated complex domain"/>
    <property type="match status" value="1"/>
</dbReference>
<dbReference type="InterPro" id="IPR016641">
    <property type="entry name" value="EGD2/NACA0like"/>
</dbReference>
<dbReference type="InterPro" id="IPR044034">
    <property type="entry name" value="NAC-like_UBA"/>
</dbReference>
<dbReference type="InterPro" id="IPR038187">
    <property type="entry name" value="NAC_A/B_dom_sf"/>
</dbReference>
<dbReference type="InterPro" id="IPR002715">
    <property type="entry name" value="Nas_poly-pep-assoc_cplx_dom"/>
</dbReference>
<dbReference type="PANTHER" id="PTHR21713">
    <property type="entry name" value="NASCENT POLYPEPTIDE ASSOCIATED COMPLEX ALPHA SUBUNIT-RELATED"/>
    <property type="match status" value="1"/>
</dbReference>
<dbReference type="Pfam" id="PF01849">
    <property type="entry name" value="NAC"/>
    <property type="match status" value="1"/>
</dbReference>
<dbReference type="Pfam" id="PF19026">
    <property type="entry name" value="UBA_HYPK"/>
    <property type="match status" value="1"/>
</dbReference>
<dbReference type="PIRSF" id="PIRSF015901">
    <property type="entry name" value="NAC_alpha"/>
    <property type="match status" value="1"/>
</dbReference>
<dbReference type="SMART" id="SM01407">
    <property type="entry name" value="NAC"/>
    <property type="match status" value="1"/>
</dbReference>
<dbReference type="PROSITE" id="PS51151">
    <property type="entry name" value="NAC_AB"/>
    <property type="match status" value="1"/>
</dbReference>
<feature type="chain" id="PRO_0000232706" description="Nascent polypeptide-associated complex subunit alpha">
    <location>
        <begin position="1"/>
        <end position="197"/>
    </location>
</feature>
<feature type="domain" description="NAC-A/B" evidence="2">
    <location>
        <begin position="36"/>
        <end position="101"/>
    </location>
</feature>
<feature type="domain" description="UBA">
    <location>
        <begin position="158"/>
        <end position="195"/>
    </location>
</feature>
<feature type="region of interest" description="Disordered" evidence="3">
    <location>
        <begin position="1"/>
        <end position="46"/>
    </location>
</feature>
<feature type="region of interest" description="Disordered" evidence="3">
    <location>
        <begin position="120"/>
        <end position="154"/>
    </location>
</feature>
<feature type="compositionally biased region" description="Acidic residues" evidence="3">
    <location>
        <begin position="1"/>
        <end position="20"/>
    </location>
</feature>
<feature type="compositionally biased region" description="Basic and acidic residues" evidence="3">
    <location>
        <begin position="134"/>
        <end position="154"/>
    </location>
</feature>
<keyword id="KW-0653">Protein transport</keyword>
<keyword id="KW-0813">Transport</keyword>
<sequence length="197" mass="21150">MAEPVEDSVDEISSEGDSDVEESKGPEGSAPKNRQDKNERKSRKLLGKLGMKPVDGVTKVCIKKSKQIYFVVNKPDVYKLPNSDTYVIFGEAKVEDMSQNSALEAAQRLSQLSSALQAVGADRGTDSSAAAHASGHDHAHDHDHSHGDCASKADESSVNQSDIDLVVSQVGCTREQAVEALIKNKGDIVETIMQLST</sequence>
<evidence type="ECO:0000250" key="1"/>
<evidence type="ECO:0000255" key="2">
    <source>
        <dbReference type="PROSITE-ProRule" id="PRU00507"/>
    </source>
</evidence>
<evidence type="ECO:0000256" key="3">
    <source>
        <dbReference type="SAM" id="MobiDB-lite"/>
    </source>
</evidence>
<evidence type="ECO:0000305" key="4"/>
<comment type="function">
    <text evidence="1">May promote appropriate targeting of ribosome-nascent polypeptide complexes.</text>
</comment>
<comment type="similarity">
    <text evidence="4">Belongs to the NAC-alpha family.</text>
</comment>
<proteinExistence type="evidence at transcript level"/>
<name>NACA_BABDI</name>
<accession>Q45FF9</accession>
<protein>
    <recommendedName>
        <fullName>Nascent polypeptide-associated complex subunit alpha</fullName>
        <shortName>NAC-alpha</shortName>
    </recommendedName>
    <alternativeName>
        <fullName>Alpha-NAC</fullName>
    </alternativeName>
</protein>
<organism>
    <name type="scientific">Babesia divergens</name>
    <dbReference type="NCBI Taxonomy" id="32595"/>
    <lineage>
        <taxon>Eukaryota</taxon>
        <taxon>Sar</taxon>
        <taxon>Alveolata</taxon>
        <taxon>Apicomplexa</taxon>
        <taxon>Aconoidasida</taxon>
        <taxon>Piroplasmida</taxon>
        <taxon>Babesiidae</taxon>
        <taxon>Babesia</taxon>
    </lineage>
</organism>